<keyword id="KW-0963">Cytoplasm</keyword>
<keyword id="KW-0324">Glycolysis</keyword>
<keyword id="KW-0456">Lyase</keyword>
<keyword id="KW-0460">Magnesium</keyword>
<keyword id="KW-0479">Metal-binding</keyword>
<keyword id="KW-0964">Secreted</keyword>
<protein>
    <recommendedName>
        <fullName evidence="1">Enolase</fullName>
        <ecNumber evidence="1">4.2.1.11</ecNumber>
    </recommendedName>
    <alternativeName>
        <fullName evidence="1">2-phospho-D-glycerate hydro-lyase</fullName>
    </alternativeName>
    <alternativeName>
        <fullName evidence="1">2-phosphoglycerate dehydratase</fullName>
    </alternativeName>
</protein>
<organism>
    <name type="scientific">Cereibacter sphaeroides (strain ATCC 17029 / ATH 2.4.9)</name>
    <name type="common">Rhodobacter sphaeroides</name>
    <dbReference type="NCBI Taxonomy" id="349101"/>
    <lineage>
        <taxon>Bacteria</taxon>
        <taxon>Pseudomonadati</taxon>
        <taxon>Pseudomonadota</taxon>
        <taxon>Alphaproteobacteria</taxon>
        <taxon>Rhodobacterales</taxon>
        <taxon>Paracoccaceae</taxon>
        <taxon>Cereibacter</taxon>
    </lineage>
</organism>
<proteinExistence type="inferred from homology"/>
<feature type="chain" id="PRO_1000019241" description="Enolase">
    <location>
        <begin position="1"/>
        <end position="425"/>
    </location>
</feature>
<feature type="active site" description="Proton donor" evidence="1">
    <location>
        <position position="205"/>
    </location>
</feature>
<feature type="active site" description="Proton acceptor" evidence="1">
    <location>
        <position position="337"/>
    </location>
</feature>
<feature type="binding site" evidence="1">
    <location>
        <position position="163"/>
    </location>
    <ligand>
        <name>(2R)-2-phosphoglycerate</name>
        <dbReference type="ChEBI" id="CHEBI:58289"/>
    </ligand>
</feature>
<feature type="binding site" evidence="1">
    <location>
        <position position="242"/>
    </location>
    <ligand>
        <name>Mg(2+)</name>
        <dbReference type="ChEBI" id="CHEBI:18420"/>
    </ligand>
</feature>
<feature type="binding site" evidence="1">
    <location>
        <position position="285"/>
    </location>
    <ligand>
        <name>Mg(2+)</name>
        <dbReference type="ChEBI" id="CHEBI:18420"/>
    </ligand>
</feature>
<feature type="binding site" evidence="1">
    <location>
        <position position="312"/>
    </location>
    <ligand>
        <name>Mg(2+)</name>
        <dbReference type="ChEBI" id="CHEBI:18420"/>
    </ligand>
</feature>
<feature type="binding site" evidence="1">
    <location>
        <position position="337"/>
    </location>
    <ligand>
        <name>(2R)-2-phosphoglycerate</name>
        <dbReference type="ChEBI" id="CHEBI:58289"/>
    </ligand>
</feature>
<feature type="binding site" evidence="1">
    <location>
        <position position="366"/>
    </location>
    <ligand>
        <name>(2R)-2-phosphoglycerate</name>
        <dbReference type="ChEBI" id="CHEBI:58289"/>
    </ligand>
</feature>
<feature type="binding site" evidence="1">
    <location>
        <position position="367"/>
    </location>
    <ligand>
        <name>(2R)-2-phosphoglycerate</name>
        <dbReference type="ChEBI" id="CHEBI:58289"/>
    </ligand>
</feature>
<feature type="binding site" evidence="1">
    <location>
        <position position="388"/>
    </location>
    <ligand>
        <name>(2R)-2-phosphoglycerate</name>
        <dbReference type="ChEBI" id="CHEBI:58289"/>
    </ligand>
</feature>
<reference key="1">
    <citation type="submission" date="2007-02" db="EMBL/GenBank/DDBJ databases">
        <title>Complete sequence of chromosome 1 of Rhodobacter sphaeroides ATCC 17029.</title>
        <authorList>
            <person name="Copeland A."/>
            <person name="Lucas S."/>
            <person name="Lapidus A."/>
            <person name="Barry K."/>
            <person name="Detter J.C."/>
            <person name="Glavina del Rio T."/>
            <person name="Hammon N."/>
            <person name="Israni S."/>
            <person name="Dalin E."/>
            <person name="Tice H."/>
            <person name="Pitluck S."/>
            <person name="Kiss H."/>
            <person name="Brettin T."/>
            <person name="Bruce D."/>
            <person name="Han C."/>
            <person name="Tapia R."/>
            <person name="Gilna P."/>
            <person name="Schmutz J."/>
            <person name="Larimer F."/>
            <person name="Land M."/>
            <person name="Hauser L."/>
            <person name="Kyrpides N."/>
            <person name="Mikhailova N."/>
            <person name="Richardson P."/>
            <person name="Mackenzie C."/>
            <person name="Choudhary M."/>
            <person name="Donohue T.J."/>
            <person name="Kaplan S."/>
        </authorList>
    </citation>
    <scope>NUCLEOTIDE SEQUENCE [LARGE SCALE GENOMIC DNA]</scope>
    <source>
        <strain>ATCC 17029 / ATH 2.4.9</strain>
    </source>
</reference>
<sequence>MSTIIDIHAREILDSRGNPTVEVDVTLESGAFGRAAVPSGASTGAHEAVEKRDGDKSRYMGKGVLEAVAAVNGEIAEMLVGFDATEQVGIDRTMIEMDGTPNKGRLGANAILGVSLAVAKAAAEFTNQPLFRYVGGSSARVLPVPMMNIINGGEHADNPIDIQEFMIMPVAAQNVREAIRMGSEVFHTLKKELAAGGFNTGIGDEGGFAPNISSTREALDYILRSIEKAGYKPGEDIYLALDCASTEYFKGGKYEMKGEGKSLTSAENVDYLAALCADYPIISIEDGCAEDDWEGWKLLTDKLGAKVQLVGDDLFVTNPKRLEQGIKAGVANSMLVKVNQIGSLTETLMAVDMAHRARYTNVMSHRSGETEDATIADLAVATNCGQIKTGSLSRSDRLAKYNQLIRIEEMLGEVAEYAGRSILKV</sequence>
<name>ENO_CERS1</name>
<evidence type="ECO:0000255" key="1">
    <source>
        <dbReference type="HAMAP-Rule" id="MF_00318"/>
    </source>
</evidence>
<dbReference type="EC" id="4.2.1.11" evidence="1"/>
<dbReference type="EMBL" id="CP000577">
    <property type="protein sequence ID" value="ABN76269.1"/>
    <property type="molecule type" value="Genomic_DNA"/>
</dbReference>
<dbReference type="RefSeq" id="WP_002719649.1">
    <property type="nucleotide sequence ID" value="NC_009049.1"/>
</dbReference>
<dbReference type="SMR" id="A3PIV3"/>
<dbReference type="GeneID" id="67446253"/>
<dbReference type="KEGG" id="rsh:Rsph17029_1159"/>
<dbReference type="HOGENOM" id="CLU_031223_2_1_5"/>
<dbReference type="UniPathway" id="UPA00109">
    <property type="reaction ID" value="UER00187"/>
</dbReference>
<dbReference type="GO" id="GO:0009986">
    <property type="term" value="C:cell surface"/>
    <property type="evidence" value="ECO:0007669"/>
    <property type="project" value="UniProtKB-SubCell"/>
</dbReference>
<dbReference type="GO" id="GO:0005576">
    <property type="term" value="C:extracellular region"/>
    <property type="evidence" value="ECO:0007669"/>
    <property type="project" value="UniProtKB-SubCell"/>
</dbReference>
<dbReference type="GO" id="GO:0000015">
    <property type="term" value="C:phosphopyruvate hydratase complex"/>
    <property type="evidence" value="ECO:0007669"/>
    <property type="project" value="InterPro"/>
</dbReference>
<dbReference type="GO" id="GO:0000287">
    <property type="term" value="F:magnesium ion binding"/>
    <property type="evidence" value="ECO:0007669"/>
    <property type="project" value="UniProtKB-UniRule"/>
</dbReference>
<dbReference type="GO" id="GO:0004634">
    <property type="term" value="F:phosphopyruvate hydratase activity"/>
    <property type="evidence" value="ECO:0007669"/>
    <property type="project" value="UniProtKB-UniRule"/>
</dbReference>
<dbReference type="GO" id="GO:0006096">
    <property type="term" value="P:glycolytic process"/>
    <property type="evidence" value="ECO:0007669"/>
    <property type="project" value="UniProtKB-UniRule"/>
</dbReference>
<dbReference type="CDD" id="cd03313">
    <property type="entry name" value="enolase"/>
    <property type="match status" value="1"/>
</dbReference>
<dbReference type="FunFam" id="3.20.20.120:FF:000001">
    <property type="entry name" value="Enolase"/>
    <property type="match status" value="1"/>
</dbReference>
<dbReference type="FunFam" id="3.30.390.10:FF:000001">
    <property type="entry name" value="Enolase"/>
    <property type="match status" value="1"/>
</dbReference>
<dbReference type="Gene3D" id="3.20.20.120">
    <property type="entry name" value="Enolase-like C-terminal domain"/>
    <property type="match status" value="1"/>
</dbReference>
<dbReference type="Gene3D" id="3.30.390.10">
    <property type="entry name" value="Enolase-like, N-terminal domain"/>
    <property type="match status" value="1"/>
</dbReference>
<dbReference type="HAMAP" id="MF_00318">
    <property type="entry name" value="Enolase"/>
    <property type="match status" value="1"/>
</dbReference>
<dbReference type="InterPro" id="IPR000941">
    <property type="entry name" value="Enolase"/>
</dbReference>
<dbReference type="InterPro" id="IPR036849">
    <property type="entry name" value="Enolase-like_C_sf"/>
</dbReference>
<dbReference type="InterPro" id="IPR029017">
    <property type="entry name" value="Enolase-like_N"/>
</dbReference>
<dbReference type="InterPro" id="IPR020810">
    <property type="entry name" value="Enolase_C"/>
</dbReference>
<dbReference type="InterPro" id="IPR020809">
    <property type="entry name" value="Enolase_CS"/>
</dbReference>
<dbReference type="InterPro" id="IPR020811">
    <property type="entry name" value="Enolase_N"/>
</dbReference>
<dbReference type="NCBIfam" id="TIGR01060">
    <property type="entry name" value="eno"/>
    <property type="match status" value="1"/>
</dbReference>
<dbReference type="PANTHER" id="PTHR11902">
    <property type="entry name" value="ENOLASE"/>
    <property type="match status" value="1"/>
</dbReference>
<dbReference type="PANTHER" id="PTHR11902:SF1">
    <property type="entry name" value="ENOLASE"/>
    <property type="match status" value="1"/>
</dbReference>
<dbReference type="Pfam" id="PF00113">
    <property type="entry name" value="Enolase_C"/>
    <property type="match status" value="1"/>
</dbReference>
<dbReference type="Pfam" id="PF03952">
    <property type="entry name" value="Enolase_N"/>
    <property type="match status" value="1"/>
</dbReference>
<dbReference type="PIRSF" id="PIRSF001400">
    <property type="entry name" value="Enolase"/>
    <property type="match status" value="1"/>
</dbReference>
<dbReference type="PRINTS" id="PR00148">
    <property type="entry name" value="ENOLASE"/>
</dbReference>
<dbReference type="SFLD" id="SFLDS00001">
    <property type="entry name" value="Enolase"/>
    <property type="match status" value="1"/>
</dbReference>
<dbReference type="SFLD" id="SFLDF00002">
    <property type="entry name" value="enolase"/>
    <property type="match status" value="1"/>
</dbReference>
<dbReference type="SMART" id="SM01192">
    <property type="entry name" value="Enolase_C"/>
    <property type="match status" value="1"/>
</dbReference>
<dbReference type="SMART" id="SM01193">
    <property type="entry name" value="Enolase_N"/>
    <property type="match status" value="1"/>
</dbReference>
<dbReference type="SUPFAM" id="SSF51604">
    <property type="entry name" value="Enolase C-terminal domain-like"/>
    <property type="match status" value="1"/>
</dbReference>
<dbReference type="SUPFAM" id="SSF54826">
    <property type="entry name" value="Enolase N-terminal domain-like"/>
    <property type="match status" value="1"/>
</dbReference>
<dbReference type="PROSITE" id="PS00164">
    <property type="entry name" value="ENOLASE"/>
    <property type="match status" value="1"/>
</dbReference>
<comment type="function">
    <text evidence="1">Catalyzes the reversible conversion of 2-phosphoglycerate (2-PG) into phosphoenolpyruvate (PEP). It is essential for the degradation of carbohydrates via glycolysis.</text>
</comment>
<comment type="catalytic activity">
    <reaction evidence="1">
        <text>(2R)-2-phosphoglycerate = phosphoenolpyruvate + H2O</text>
        <dbReference type="Rhea" id="RHEA:10164"/>
        <dbReference type="ChEBI" id="CHEBI:15377"/>
        <dbReference type="ChEBI" id="CHEBI:58289"/>
        <dbReference type="ChEBI" id="CHEBI:58702"/>
        <dbReference type="EC" id="4.2.1.11"/>
    </reaction>
</comment>
<comment type="cofactor">
    <cofactor evidence="1">
        <name>Mg(2+)</name>
        <dbReference type="ChEBI" id="CHEBI:18420"/>
    </cofactor>
    <text evidence="1">Binds a second Mg(2+) ion via substrate during catalysis.</text>
</comment>
<comment type="pathway">
    <text evidence="1">Carbohydrate degradation; glycolysis; pyruvate from D-glyceraldehyde 3-phosphate: step 4/5.</text>
</comment>
<comment type="subcellular location">
    <subcellularLocation>
        <location evidence="1">Cytoplasm</location>
    </subcellularLocation>
    <subcellularLocation>
        <location evidence="1">Secreted</location>
    </subcellularLocation>
    <subcellularLocation>
        <location evidence="1">Cell surface</location>
    </subcellularLocation>
    <text evidence="1">Fractions of enolase are present in both the cytoplasm and on the cell surface.</text>
</comment>
<comment type="similarity">
    <text evidence="1">Belongs to the enolase family.</text>
</comment>
<gene>
    <name evidence="1" type="primary">eno</name>
    <name type="ordered locus">Rsph17029_1159</name>
</gene>
<accession>A3PIV3</accession>